<name>FABH_STRP4</name>
<keyword id="KW-0012">Acyltransferase</keyword>
<keyword id="KW-0963">Cytoplasm</keyword>
<keyword id="KW-0275">Fatty acid biosynthesis</keyword>
<keyword id="KW-0276">Fatty acid metabolism</keyword>
<keyword id="KW-0444">Lipid biosynthesis</keyword>
<keyword id="KW-0443">Lipid metabolism</keyword>
<keyword id="KW-0511">Multifunctional enzyme</keyword>
<keyword id="KW-0808">Transferase</keyword>
<comment type="function">
    <text evidence="1">Catalyzes the condensation reaction of fatty acid synthesis by the addition to an acyl acceptor of two carbons from malonyl-ACP. Catalyzes the first condensation reaction which initiates fatty acid synthesis and may therefore play a role in governing the total rate of fatty acid production. Possesses both acetoacetyl-ACP synthase and acetyl transacylase activities. Its substrate specificity determines the biosynthesis of branched-chain and/or straight-chain of fatty acids.</text>
</comment>
<comment type="catalytic activity">
    <reaction evidence="1">
        <text>malonyl-[ACP] + acetyl-CoA + H(+) = 3-oxobutanoyl-[ACP] + CO2 + CoA</text>
        <dbReference type="Rhea" id="RHEA:12080"/>
        <dbReference type="Rhea" id="RHEA-COMP:9623"/>
        <dbReference type="Rhea" id="RHEA-COMP:9625"/>
        <dbReference type="ChEBI" id="CHEBI:15378"/>
        <dbReference type="ChEBI" id="CHEBI:16526"/>
        <dbReference type="ChEBI" id="CHEBI:57287"/>
        <dbReference type="ChEBI" id="CHEBI:57288"/>
        <dbReference type="ChEBI" id="CHEBI:78449"/>
        <dbReference type="ChEBI" id="CHEBI:78450"/>
        <dbReference type="EC" id="2.3.1.180"/>
    </reaction>
</comment>
<comment type="pathway">
    <text evidence="1">Lipid metabolism; fatty acid biosynthesis.</text>
</comment>
<comment type="subunit">
    <text evidence="1">Homodimer.</text>
</comment>
<comment type="subcellular location">
    <subcellularLocation>
        <location evidence="1">Cytoplasm</location>
    </subcellularLocation>
</comment>
<comment type="domain">
    <text evidence="1">The last Arg residue of the ACP-binding site is essential for the weak association between ACP/AcpP and FabH.</text>
</comment>
<comment type="similarity">
    <text evidence="1">Belongs to the thiolase-like superfamily. FabH family.</text>
</comment>
<evidence type="ECO:0000255" key="1">
    <source>
        <dbReference type="HAMAP-Rule" id="MF_01815"/>
    </source>
</evidence>
<organism>
    <name type="scientific">Streptococcus pneumoniae serotype 19F (strain G54)</name>
    <dbReference type="NCBI Taxonomy" id="512566"/>
    <lineage>
        <taxon>Bacteria</taxon>
        <taxon>Bacillati</taxon>
        <taxon>Bacillota</taxon>
        <taxon>Bacilli</taxon>
        <taxon>Lactobacillales</taxon>
        <taxon>Streptococcaceae</taxon>
        <taxon>Streptococcus</taxon>
    </lineage>
</organism>
<protein>
    <recommendedName>
        <fullName evidence="1">Beta-ketoacyl-[acyl-carrier-protein] synthase III</fullName>
        <shortName evidence="1">Beta-ketoacyl-ACP synthase III</shortName>
        <shortName evidence="1">KAS III</shortName>
        <ecNumber evidence="1">2.3.1.180</ecNumber>
    </recommendedName>
    <alternativeName>
        <fullName evidence="1">3-oxoacyl-[acyl-carrier-protein] synthase 3</fullName>
    </alternativeName>
    <alternativeName>
        <fullName evidence="1">3-oxoacyl-[acyl-carrier-protein] synthase III</fullName>
    </alternativeName>
</protein>
<reference key="1">
    <citation type="journal article" date="2001" name="Microb. Drug Resist.">
        <title>Annotated draft genomic sequence from a Streptococcus pneumoniae type 19F clinical isolate.</title>
        <authorList>
            <person name="Dopazo J."/>
            <person name="Mendoza A."/>
            <person name="Herrero J."/>
            <person name="Caldara F."/>
            <person name="Humbert Y."/>
            <person name="Friedli L."/>
            <person name="Guerrier M."/>
            <person name="Grand-Schenk E."/>
            <person name="Gandin C."/>
            <person name="de Francesco M."/>
            <person name="Polissi A."/>
            <person name="Buell G."/>
            <person name="Feger G."/>
            <person name="Garcia E."/>
            <person name="Peitsch M."/>
            <person name="Garcia-Bustos J.F."/>
        </authorList>
    </citation>
    <scope>NUCLEOTIDE SEQUENCE [LARGE SCALE GENOMIC DNA]</scope>
    <source>
        <strain>G54</strain>
    </source>
</reference>
<reference key="2">
    <citation type="submission" date="2008-03" db="EMBL/GenBank/DDBJ databases">
        <title>Pneumococcal beta glucoside metabolism investigated by whole genome comparison.</title>
        <authorList>
            <person name="Mulas L."/>
            <person name="Trappetti C."/>
            <person name="Hakenbeck R."/>
            <person name="Iannelli F."/>
            <person name="Pozzi G."/>
            <person name="Davidsen T.M."/>
            <person name="Tettelin H."/>
            <person name="Oggioni M."/>
        </authorList>
    </citation>
    <scope>NUCLEOTIDE SEQUENCE [LARGE SCALE GENOMIC DNA]</scope>
    <source>
        <strain>G54</strain>
    </source>
</reference>
<accession>B5E7F8</accession>
<sequence>MAFAKISQVAHYVPEQVVTNHDLAQIMDTNDEWISSRTGIRQRHISRTESTSDLATEVAKKLMAKAGITGKELDFIILATITPDSMMPSTAARVQANIGANKAFAFDLTAACSGFVFALSTAEKFIASGRFQKGLVIGSETLSKAVDWSDRSTAVLFGDGAGGVLLEASEQEHFLAESLNSDGSRSECLTYGHSGLHSPFSDQESADSFLKMDGRTVFDFAIRDVAKSIKQTIDESPIEVTDLDYLLLHQANDRILDKMARKIGVDRAKLPANMMEYGNTSAASIPILLSECVEQGLIPLDGSQTVLLSGFGGGLTWGTLILTI</sequence>
<proteinExistence type="inferred from homology"/>
<gene>
    <name evidence="1" type="primary">fabH</name>
    <name type="ordered locus">SPG_0383</name>
</gene>
<feature type="chain" id="PRO_1000187898" description="Beta-ketoacyl-[acyl-carrier-protein] synthase III">
    <location>
        <begin position="1"/>
        <end position="324"/>
    </location>
</feature>
<feature type="region of interest" description="ACP-binding" evidence="1">
    <location>
        <begin position="250"/>
        <end position="254"/>
    </location>
</feature>
<feature type="active site" evidence="1">
    <location>
        <position position="112"/>
    </location>
</feature>
<feature type="active site" evidence="1">
    <location>
        <position position="249"/>
    </location>
</feature>
<feature type="active site" evidence="1">
    <location>
        <position position="279"/>
    </location>
</feature>
<dbReference type="EC" id="2.3.1.180" evidence="1"/>
<dbReference type="EMBL" id="CP001015">
    <property type="protein sequence ID" value="ACF56437.1"/>
    <property type="molecule type" value="Genomic_DNA"/>
</dbReference>
<dbReference type="SMR" id="B5E7F8"/>
<dbReference type="KEGG" id="spx:SPG_0383"/>
<dbReference type="HOGENOM" id="CLU_039592_4_1_9"/>
<dbReference type="UniPathway" id="UPA00094"/>
<dbReference type="GO" id="GO:0005737">
    <property type="term" value="C:cytoplasm"/>
    <property type="evidence" value="ECO:0007669"/>
    <property type="project" value="UniProtKB-SubCell"/>
</dbReference>
<dbReference type="GO" id="GO:0004315">
    <property type="term" value="F:3-oxoacyl-[acyl-carrier-protein] synthase activity"/>
    <property type="evidence" value="ECO:0007669"/>
    <property type="project" value="InterPro"/>
</dbReference>
<dbReference type="GO" id="GO:0033818">
    <property type="term" value="F:beta-ketoacyl-acyl-carrier-protein synthase III activity"/>
    <property type="evidence" value="ECO:0007669"/>
    <property type="project" value="UniProtKB-UniRule"/>
</dbReference>
<dbReference type="GO" id="GO:0006633">
    <property type="term" value="P:fatty acid biosynthetic process"/>
    <property type="evidence" value="ECO:0007669"/>
    <property type="project" value="UniProtKB-UniRule"/>
</dbReference>
<dbReference type="CDD" id="cd00830">
    <property type="entry name" value="KAS_III"/>
    <property type="match status" value="1"/>
</dbReference>
<dbReference type="Gene3D" id="3.40.47.10">
    <property type="match status" value="1"/>
</dbReference>
<dbReference type="HAMAP" id="MF_01815">
    <property type="entry name" value="FabH"/>
    <property type="match status" value="1"/>
</dbReference>
<dbReference type="InterPro" id="IPR013747">
    <property type="entry name" value="ACP_syn_III_C"/>
</dbReference>
<dbReference type="InterPro" id="IPR013751">
    <property type="entry name" value="ACP_syn_III_N"/>
</dbReference>
<dbReference type="InterPro" id="IPR004655">
    <property type="entry name" value="FabH"/>
</dbReference>
<dbReference type="InterPro" id="IPR016039">
    <property type="entry name" value="Thiolase-like"/>
</dbReference>
<dbReference type="NCBIfam" id="TIGR00747">
    <property type="entry name" value="fabH"/>
    <property type="match status" value="1"/>
</dbReference>
<dbReference type="NCBIfam" id="NF006829">
    <property type="entry name" value="PRK09352.1"/>
    <property type="match status" value="1"/>
</dbReference>
<dbReference type="PANTHER" id="PTHR43091">
    <property type="entry name" value="3-OXOACYL-[ACYL-CARRIER-PROTEIN] SYNTHASE"/>
    <property type="match status" value="1"/>
</dbReference>
<dbReference type="PANTHER" id="PTHR43091:SF1">
    <property type="entry name" value="BETA-KETOACYL-[ACYL-CARRIER-PROTEIN] SYNTHASE III, CHLOROPLASTIC"/>
    <property type="match status" value="1"/>
</dbReference>
<dbReference type="Pfam" id="PF08545">
    <property type="entry name" value="ACP_syn_III"/>
    <property type="match status" value="1"/>
</dbReference>
<dbReference type="Pfam" id="PF08541">
    <property type="entry name" value="ACP_syn_III_C"/>
    <property type="match status" value="1"/>
</dbReference>
<dbReference type="SUPFAM" id="SSF53901">
    <property type="entry name" value="Thiolase-like"/>
    <property type="match status" value="1"/>
</dbReference>